<name>LEU1_PSEPG</name>
<dbReference type="EC" id="2.3.3.13" evidence="1"/>
<dbReference type="EMBL" id="CP000926">
    <property type="protein sequence ID" value="ABY96933.1"/>
    <property type="molecule type" value="Genomic_DNA"/>
</dbReference>
<dbReference type="RefSeq" id="WP_012270717.1">
    <property type="nucleotide sequence ID" value="NC_010322.1"/>
</dbReference>
<dbReference type="SMR" id="B0KRD9"/>
<dbReference type="KEGG" id="ppg:PputGB1_1023"/>
<dbReference type="eggNOG" id="COG0119">
    <property type="taxonomic scope" value="Bacteria"/>
</dbReference>
<dbReference type="HOGENOM" id="CLU_004588_3_0_6"/>
<dbReference type="UniPathway" id="UPA00048">
    <property type="reaction ID" value="UER00070"/>
</dbReference>
<dbReference type="Proteomes" id="UP000002157">
    <property type="component" value="Chromosome"/>
</dbReference>
<dbReference type="GO" id="GO:0005737">
    <property type="term" value="C:cytoplasm"/>
    <property type="evidence" value="ECO:0007669"/>
    <property type="project" value="UniProtKB-SubCell"/>
</dbReference>
<dbReference type="GO" id="GO:0003852">
    <property type="term" value="F:2-isopropylmalate synthase activity"/>
    <property type="evidence" value="ECO:0007669"/>
    <property type="project" value="UniProtKB-UniRule"/>
</dbReference>
<dbReference type="GO" id="GO:0003985">
    <property type="term" value="F:acetyl-CoA C-acetyltransferase activity"/>
    <property type="evidence" value="ECO:0007669"/>
    <property type="project" value="UniProtKB-UniRule"/>
</dbReference>
<dbReference type="GO" id="GO:0000287">
    <property type="term" value="F:magnesium ion binding"/>
    <property type="evidence" value="ECO:0007669"/>
    <property type="project" value="UniProtKB-UniRule"/>
</dbReference>
<dbReference type="GO" id="GO:0009098">
    <property type="term" value="P:L-leucine biosynthetic process"/>
    <property type="evidence" value="ECO:0007669"/>
    <property type="project" value="UniProtKB-UniRule"/>
</dbReference>
<dbReference type="CDD" id="cd07942">
    <property type="entry name" value="DRE_TIM_LeuA"/>
    <property type="match status" value="1"/>
</dbReference>
<dbReference type="FunFam" id="3.20.20.70:FF:000045">
    <property type="entry name" value="2-isopropylmalate synthase"/>
    <property type="match status" value="1"/>
</dbReference>
<dbReference type="Gene3D" id="3.30.160.270">
    <property type="match status" value="1"/>
</dbReference>
<dbReference type="Gene3D" id="3.20.20.70">
    <property type="entry name" value="Aldolase class I"/>
    <property type="match status" value="1"/>
</dbReference>
<dbReference type="HAMAP" id="MF_00572">
    <property type="entry name" value="LeuA_type2"/>
    <property type="match status" value="1"/>
</dbReference>
<dbReference type="InterPro" id="IPR013709">
    <property type="entry name" value="2-isopropylmalate_synth_dimer"/>
</dbReference>
<dbReference type="InterPro" id="IPR002034">
    <property type="entry name" value="AIPM/Hcit_synth_CS"/>
</dbReference>
<dbReference type="InterPro" id="IPR013785">
    <property type="entry name" value="Aldolase_TIM"/>
</dbReference>
<dbReference type="InterPro" id="IPR005668">
    <property type="entry name" value="IPM_Synthase"/>
</dbReference>
<dbReference type="InterPro" id="IPR054692">
    <property type="entry name" value="LeuA-like_post-cat"/>
</dbReference>
<dbReference type="InterPro" id="IPR036230">
    <property type="entry name" value="LeuA_allosteric_dom_sf"/>
</dbReference>
<dbReference type="InterPro" id="IPR039371">
    <property type="entry name" value="LeuA_N_DRE-TIM"/>
</dbReference>
<dbReference type="InterPro" id="IPR000891">
    <property type="entry name" value="PYR_CT"/>
</dbReference>
<dbReference type="NCBIfam" id="TIGR00970">
    <property type="entry name" value="leuA_yeast"/>
    <property type="match status" value="1"/>
</dbReference>
<dbReference type="NCBIfam" id="NF002991">
    <property type="entry name" value="PRK03739.1"/>
    <property type="match status" value="1"/>
</dbReference>
<dbReference type="PANTHER" id="PTHR46911">
    <property type="match status" value="1"/>
</dbReference>
<dbReference type="PANTHER" id="PTHR46911:SF1">
    <property type="entry name" value="2-ISOPROPYLMALATE SYNTHASE"/>
    <property type="match status" value="1"/>
</dbReference>
<dbReference type="Pfam" id="PF00682">
    <property type="entry name" value="HMGL-like"/>
    <property type="match status" value="1"/>
</dbReference>
<dbReference type="Pfam" id="PF22615">
    <property type="entry name" value="IPMS_D2"/>
    <property type="match status" value="1"/>
</dbReference>
<dbReference type="Pfam" id="PF08502">
    <property type="entry name" value="LeuA_dimer"/>
    <property type="match status" value="1"/>
</dbReference>
<dbReference type="SMART" id="SM00917">
    <property type="entry name" value="LeuA_dimer"/>
    <property type="match status" value="1"/>
</dbReference>
<dbReference type="SUPFAM" id="SSF110921">
    <property type="entry name" value="2-isopropylmalate synthase LeuA, allosteric (dimerisation) domain"/>
    <property type="match status" value="1"/>
</dbReference>
<dbReference type="SUPFAM" id="SSF51569">
    <property type="entry name" value="Aldolase"/>
    <property type="match status" value="1"/>
</dbReference>
<dbReference type="SUPFAM" id="SSF89000">
    <property type="entry name" value="post-HMGL domain-like"/>
    <property type="match status" value="1"/>
</dbReference>
<dbReference type="PROSITE" id="PS00815">
    <property type="entry name" value="AIPM_HOMOCIT_SYNTH_1"/>
    <property type="match status" value="1"/>
</dbReference>
<dbReference type="PROSITE" id="PS00816">
    <property type="entry name" value="AIPM_HOMOCIT_SYNTH_2"/>
    <property type="match status" value="1"/>
</dbReference>
<dbReference type="PROSITE" id="PS50991">
    <property type="entry name" value="PYR_CT"/>
    <property type="match status" value="1"/>
</dbReference>
<proteinExistence type="inferred from homology"/>
<gene>
    <name evidence="1" type="primary">leuA</name>
    <name type="ordered locus">PputGB1_1023</name>
</gene>
<sequence length="557" mass="61794">MTMLKDPSKKYRAFPTIDLPDRTWPSKTITEAPIWCSSDLRDGNQSLIEPMDSEKKLRFWKTLVQVGVKEIEASFPSASQTDFDFVRTLIQDGHIPDDTTIQVLTQAREDLIARTFESLRGAKKAIVHLYNATSPSFRRIVFNQDKQGVKDIAVNAAKLFVKYAAQQPETHWTFQYSPETFSATEMEFAKEVCDAVIEVWNPTPEHKIILNLPATVEVSTPNIYADQIEWFCRNVSRRDSVIISLHCHNDRGTGIAATELGLMAGADRAEGCLFGNGERTGNVDLVTLALNLYTQGIDPQLDFSDIDGVRKVVEECNQLPVHPRHPYVGDLVHTAFSGSHQDAIRKGFAKQQEGERWEVPYLPIDPADIGRSYEAVIRVNSQSGKGGITYLLEQEYGISLPRRMQIEFSQVVQGETDRLGLEMTAQQIYSLLHKEYLQANAPYALVSHRLQEENGHSAVEVEVAGEGETTLHWRGKGNGALEALVAGLPIAVEIMDYNEHAIGAGTNAKAAAYIELRVAGGRPVHGVGIDENITTASFKALFSALNRSLSQQEAKAA</sequence>
<organism>
    <name type="scientific">Pseudomonas putida (strain GB-1)</name>
    <dbReference type="NCBI Taxonomy" id="76869"/>
    <lineage>
        <taxon>Bacteria</taxon>
        <taxon>Pseudomonadati</taxon>
        <taxon>Pseudomonadota</taxon>
        <taxon>Gammaproteobacteria</taxon>
        <taxon>Pseudomonadales</taxon>
        <taxon>Pseudomonadaceae</taxon>
        <taxon>Pseudomonas</taxon>
    </lineage>
</organism>
<reference key="1">
    <citation type="submission" date="2008-01" db="EMBL/GenBank/DDBJ databases">
        <title>Complete sequence of Pseudomonas putida GB-1.</title>
        <authorList>
            <consortium name="US DOE Joint Genome Institute"/>
            <person name="Copeland A."/>
            <person name="Lucas S."/>
            <person name="Lapidus A."/>
            <person name="Barry K."/>
            <person name="Glavina del Rio T."/>
            <person name="Dalin E."/>
            <person name="Tice H."/>
            <person name="Pitluck S."/>
            <person name="Bruce D."/>
            <person name="Goodwin L."/>
            <person name="Chertkov O."/>
            <person name="Brettin T."/>
            <person name="Detter J.C."/>
            <person name="Han C."/>
            <person name="Kuske C.R."/>
            <person name="Schmutz J."/>
            <person name="Larimer F."/>
            <person name="Land M."/>
            <person name="Hauser L."/>
            <person name="Kyrpides N."/>
            <person name="Kim E."/>
            <person name="McCarthy J.K."/>
            <person name="Richardson P."/>
        </authorList>
    </citation>
    <scope>NUCLEOTIDE SEQUENCE [LARGE SCALE GENOMIC DNA]</scope>
    <source>
        <strain>GB-1</strain>
    </source>
</reference>
<feature type="chain" id="PRO_1000082330" description="2-isopropylmalate synthase">
    <location>
        <begin position="1"/>
        <end position="557"/>
    </location>
</feature>
<feature type="domain" description="Pyruvate carboxyltransferase" evidence="1">
    <location>
        <begin position="33"/>
        <end position="307"/>
    </location>
</feature>
<feature type="region of interest" description="Regulatory domain" evidence="1">
    <location>
        <begin position="439"/>
        <end position="557"/>
    </location>
</feature>
<feature type="binding site" evidence="1">
    <location>
        <position position="42"/>
    </location>
    <ligand>
        <name>Mg(2+)</name>
        <dbReference type="ChEBI" id="CHEBI:18420"/>
    </ligand>
</feature>
<feature type="binding site" evidence="1">
    <location>
        <position position="246"/>
    </location>
    <ligand>
        <name>Mg(2+)</name>
        <dbReference type="ChEBI" id="CHEBI:18420"/>
    </ligand>
</feature>
<feature type="binding site" evidence="1">
    <location>
        <position position="248"/>
    </location>
    <ligand>
        <name>Mg(2+)</name>
        <dbReference type="ChEBI" id="CHEBI:18420"/>
    </ligand>
</feature>
<feature type="binding site" evidence="1">
    <location>
        <position position="282"/>
    </location>
    <ligand>
        <name>Mg(2+)</name>
        <dbReference type="ChEBI" id="CHEBI:18420"/>
    </ligand>
</feature>
<protein>
    <recommendedName>
        <fullName evidence="1">2-isopropylmalate synthase</fullName>
        <ecNumber evidence="1">2.3.3.13</ecNumber>
    </recommendedName>
    <alternativeName>
        <fullName evidence="1">Alpha-IPM synthase</fullName>
    </alternativeName>
    <alternativeName>
        <fullName evidence="1">Alpha-isopropylmalate synthase</fullName>
    </alternativeName>
</protein>
<comment type="function">
    <text evidence="1">Catalyzes the condensation of the acetyl group of acetyl-CoA with 3-methyl-2-oxobutanoate (2-ketoisovalerate) to form 3-carboxy-3-hydroxy-4-methylpentanoate (2-isopropylmalate).</text>
</comment>
<comment type="catalytic activity">
    <reaction evidence="1">
        <text>3-methyl-2-oxobutanoate + acetyl-CoA + H2O = (2S)-2-isopropylmalate + CoA + H(+)</text>
        <dbReference type="Rhea" id="RHEA:21524"/>
        <dbReference type="ChEBI" id="CHEBI:1178"/>
        <dbReference type="ChEBI" id="CHEBI:11851"/>
        <dbReference type="ChEBI" id="CHEBI:15377"/>
        <dbReference type="ChEBI" id="CHEBI:15378"/>
        <dbReference type="ChEBI" id="CHEBI:57287"/>
        <dbReference type="ChEBI" id="CHEBI:57288"/>
        <dbReference type="EC" id="2.3.3.13"/>
    </reaction>
</comment>
<comment type="cofactor">
    <cofactor evidence="1">
        <name>Mg(2+)</name>
        <dbReference type="ChEBI" id="CHEBI:18420"/>
    </cofactor>
</comment>
<comment type="pathway">
    <text evidence="1">Amino-acid biosynthesis; L-leucine biosynthesis; L-leucine from 3-methyl-2-oxobutanoate: step 1/4.</text>
</comment>
<comment type="subunit">
    <text evidence="1">Homodimer.</text>
</comment>
<comment type="subcellular location">
    <subcellularLocation>
        <location evidence="1">Cytoplasm</location>
    </subcellularLocation>
</comment>
<comment type="similarity">
    <text evidence="1">Belongs to the alpha-IPM synthase/homocitrate synthase family. LeuA type 2 subfamily.</text>
</comment>
<keyword id="KW-0028">Amino-acid biosynthesis</keyword>
<keyword id="KW-0100">Branched-chain amino acid biosynthesis</keyword>
<keyword id="KW-0963">Cytoplasm</keyword>
<keyword id="KW-0432">Leucine biosynthesis</keyword>
<keyword id="KW-0460">Magnesium</keyword>
<keyword id="KW-0479">Metal-binding</keyword>
<keyword id="KW-0808">Transferase</keyword>
<accession>B0KRD9</accession>
<evidence type="ECO:0000255" key="1">
    <source>
        <dbReference type="HAMAP-Rule" id="MF_00572"/>
    </source>
</evidence>